<organism>
    <name type="scientific">Enterobacteria phage P4</name>
    <name type="common">Bacteriophage P4</name>
    <dbReference type="NCBI Taxonomy" id="10680"/>
    <lineage>
        <taxon>Viruses</taxon>
        <taxon>Duplodnaviria</taxon>
        <taxon>Heunggongvirae</taxon>
        <taxon>Uroviricota</taxon>
        <taxon>Caudoviricetes</taxon>
    </lineage>
</organism>
<protein>
    <recommendedName>
        <fullName>Protein cII</fullName>
    </recommendedName>
</protein>
<keyword id="KW-1185">Reference proteome</keyword>
<reference key="1">
    <citation type="journal article" date="1990" name="J. Virol.">
        <title>Nonessential region of bacteriophage P4: DNA sequence, transcription, gene products, and functions.</title>
        <authorList>
            <person name="Ghisotti D."/>
            <person name="Finkel S."/>
            <person name="Halling C."/>
            <person name="Deho G."/>
            <person name="Sironi G."/>
            <person name="Calendar R."/>
        </authorList>
    </citation>
    <scope>NUCLEOTIDE SEQUENCE [GENOMIC DNA]</scope>
</reference>
<reference key="2">
    <citation type="journal article" date="1990" name="Nucleic Acids Res.">
        <title>DNA sequence of satellite bacteriophage P4.</title>
        <authorList>
            <person name="Halling C."/>
            <person name="Calendar R."/>
            <person name="Christie G.E."/>
            <person name="Dale E.C."/>
            <person name="Deho G."/>
            <person name="Finkel S."/>
            <person name="Flensburg J."/>
            <person name="Ghisotti D."/>
            <person name="Kahn M.L."/>
            <person name="Lane K.B."/>
            <person name="Lin C.-S."/>
            <person name="Lindqvist B.H."/>
            <person name="Pierson L.S."/>
            <person name="Six E.W."/>
            <person name="Sunshine M.G."/>
            <person name="Ziermann R."/>
        </authorList>
    </citation>
    <scope>NUCLEOTIDE SEQUENCE [LARGE SCALE GENOMIC DNA]</scope>
</reference>
<organismHost>
    <name type="scientific">Escherichia coli</name>
    <dbReference type="NCBI Taxonomy" id="562"/>
</organismHost>
<sequence length="264" mass="30169">MAELLREQEVKIALIEWLYKKGMLSDATIINEMVVANWSRRADLAIANGSLQAFEIKSDFDSLKRLDGQLKIFKSSFEKVTIVCAPKFTSEVSKRVSSDVGVVEFQSNNSSVRFKIIQKGRVCSRLNKFVYLGFLLKSELKDLLNQYGITFSNELHRDCLEVLASKLSLNKIREFVITSIKNRYHATSNDFLSRLHGNQEISINDLALLSKAKRRNNSLVKFEFKACSEKSLNEYHKVDVDSIVRKYGDDVSYIPEKVLKRVVG</sequence>
<proteinExistence type="predicted"/>
<feature type="chain" id="PRO_0000165226" description="Protein cII">
    <location>
        <begin position="1"/>
        <end position="264"/>
    </location>
</feature>
<gene>
    <name type="primary">cII</name>
</gene>
<name>RCII_BPP4</name>
<comment type="function">
    <text>Mutations in this gene cause a clear-plaque phenotype as a result of efficient killing of infected cells by P4. How this comes about is not understood.</text>
</comment>
<dbReference type="EMBL" id="M27748">
    <property type="protein sequence ID" value="AAA32429.1"/>
    <property type="molecule type" value="Genomic_DNA"/>
</dbReference>
<dbReference type="EMBL" id="X51522">
    <property type="protein sequence ID" value="CAA35896.1"/>
    <property type="molecule type" value="Genomic_DNA"/>
</dbReference>
<dbReference type="PIR" id="C33556">
    <property type="entry name" value="GCBPP4"/>
</dbReference>
<dbReference type="RefSeq" id="NP_042034.1">
    <property type="nucleotide sequence ID" value="NC_001609.1"/>
</dbReference>
<dbReference type="SMR" id="P13059"/>
<dbReference type="KEGG" id="vg:1261084"/>
<dbReference type="Proteomes" id="UP000009093">
    <property type="component" value="Genome"/>
</dbReference>
<dbReference type="InterPro" id="IPR047729">
    <property type="entry name" value="Sce7726-like"/>
</dbReference>
<dbReference type="NCBIfam" id="NF033832">
    <property type="entry name" value="sce7726_fam"/>
    <property type="match status" value="1"/>
</dbReference>
<accession>P13059</accession>